<gene>
    <name evidence="1" type="primary">lysZ</name>
    <name type="ordered locus">M164_1989</name>
</gene>
<comment type="function">
    <text evidence="1">Involved in both the arginine and lysine biosynthetic pathways. Phosphorylates the LysW-bound precursors glutamate (for arginine biosynthesis), respectively alpha-aminoadipate (for lysine biosynthesis).</text>
</comment>
<comment type="catalytic activity">
    <reaction evidence="1">
        <text>[amino-group carrier protein]-C-terminal-N-(1,4-dicarboxybutan-1-yl)-L-glutamine + ATP = [amino-group carrier protein]-C-terminal-N-(1-carboxy-5-phosphooxy-5-oxopentan-1-yl)-L-glutamine + ADP</text>
        <dbReference type="Rhea" id="RHEA:41944"/>
        <dbReference type="Rhea" id="RHEA-COMP:9694"/>
        <dbReference type="Rhea" id="RHEA-COMP:9712"/>
        <dbReference type="ChEBI" id="CHEBI:30616"/>
        <dbReference type="ChEBI" id="CHEBI:78499"/>
        <dbReference type="ChEBI" id="CHEBI:78503"/>
        <dbReference type="ChEBI" id="CHEBI:456216"/>
        <dbReference type="EC" id="2.7.2.17"/>
    </reaction>
</comment>
<comment type="catalytic activity">
    <reaction evidence="1">
        <text>[amino-group carrier protein]-C-terminal-gamma-(L-glutamyl)-L-glutamate + ATP = [amino-group carrier protein]-C-terminal-gamma-(5-phospho-L-glutamyl)-L-glutamate + ADP</text>
        <dbReference type="Rhea" id="RHEA:52632"/>
        <dbReference type="Rhea" id="RHEA-COMP:13311"/>
        <dbReference type="Rhea" id="RHEA-COMP:13313"/>
        <dbReference type="ChEBI" id="CHEBI:30616"/>
        <dbReference type="ChEBI" id="CHEBI:136714"/>
        <dbReference type="ChEBI" id="CHEBI:136717"/>
        <dbReference type="ChEBI" id="CHEBI:456216"/>
        <dbReference type="EC" id="2.7.2.19"/>
    </reaction>
</comment>
<comment type="pathway">
    <text evidence="1">Amino-acid biosynthesis; L-lysine biosynthesis via AAA pathway; L-lysine from L-alpha-aminoadipate (Thermus route): step 2/5.</text>
</comment>
<comment type="pathway">
    <text evidence="1">Amino-acid biosynthesis; L-arginine biosynthesis.</text>
</comment>
<comment type="subcellular location">
    <subcellularLocation>
        <location evidence="1">Cytoplasm</location>
    </subcellularLocation>
</comment>
<comment type="similarity">
    <text evidence="1">Belongs to the acetylglutamate kinase family. LysZ subfamily.</text>
</comment>
<reference key="1">
    <citation type="journal article" date="2009" name="Proc. Natl. Acad. Sci. U.S.A.">
        <title>Biogeography of the Sulfolobus islandicus pan-genome.</title>
        <authorList>
            <person name="Reno M.L."/>
            <person name="Held N.L."/>
            <person name="Fields C.J."/>
            <person name="Burke P.V."/>
            <person name="Whitaker R.J."/>
        </authorList>
    </citation>
    <scope>NUCLEOTIDE SEQUENCE [LARGE SCALE GENOMIC DNA]</scope>
    <source>
        <strain>M.16.4 / Kamchatka #3</strain>
    </source>
</reference>
<keyword id="KW-0028">Amino-acid biosynthesis</keyword>
<keyword id="KW-0055">Arginine biosynthesis</keyword>
<keyword id="KW-0067">ATP-binding</keyword>
<keyword id="KW-0963">Cytoplasm</keyword>
<keyword id="KW-0418">Kinase</keyword>
<keyword id="KW-0457">Lysine biosynthesis</keyword>
<keyword id="KW-0547">Nucleotide-binding</keyword>
<keyword id="KW-0808">Transferase</keyword>
<evidence type="ECO:0000255" key="1">
    <source>
        <dbReference type="HAMAP-Rule" id="MF_02082"/>
    </source>
</evidence>
<dbReference type="EC" id="2.7.2.17" evidence="1"/>
<dbReference type="EC" id="2.7.2.19" evidence="1"/>
<dbReference type="EMBL" id="CP001402">
    <property type="protein sequence ID" value="ACR42593.1"/>
    <property type="molecule type" value="Genomic_DNA"/>
</dbReference>
<dbReference type="RefSeq" id="WP_012711951.1">
    <property type="nucleotide sequence ID" value="NC_012726.1"/>
</dbReference>
<dbReference type="SMR" id="C4KJ29"/>
<dbReference type="KEGG" id="sid:M164_1989"/>
<dbReference type="HOGENOM" id="CLU_053680_2_0_2"/>
<dbReference type="UniPathway" id="UPA00033">
    <property type="reaction ID" value="UER00036"/>
</dbReference>
<dbReference type="UniPathway" id="UPA00068"/>
<dbReference type="Proteomes" id="UP000001479">
    <property type="component" value="Chromosome"/>
</dbReference>
<dbReference type="GO" id="GO:0005737">
    <property type="term" value="C:cytoplasm"/>
    <property type="evidence" value="ECO:0007669"/>
    <property type="project" value="UniProtKB-SubCell"/>
</dbReference>
<dbReference type="GO" id="GO:0003991">
    <property type="term" value="F:acetylglutamate kinase activity"/>
    <property type="evidence" value="ECO:0007669"/>
    <property type="project" value="TreeGrafter"/>
</dbReference>
<dbReference type="GO" id="GO:0005524">
    <property type="term" value="F:ATP binding"/>
    <property type="evidence" value="ECO:0007669"/>
    <property type="project" value="UniProtKB-KW"/>
</dbReference>
<dbReference type="GO" id="GO:0043744">
    <property type="term" value="F:N2-acetyl-L-aminoadipate kinase activity"/>
    <property type="evidence" value="ECO:0007669"/>
    <property type="project" value="RHEA"/>
</dbReference>
<dbReference type="GO" id="GO:0042450">
    <property type="term" value="P:arginine biosynthetic process via ornithine"/>
    <property type="evidence" value="ECO:0007669"/>
    <property type="project" value="UniProtKB-UniRule"/>
</dbReference>
<dbReference type="GO" id="GO:0006526">
    <property type="term" value="P:L-arginine biosynthetic process"/>
    <property type="evidence" value="ECO:0007669"/>
    <property type="project" value="UniProtKB-UniPathway"/>
</dbReference>
<dbReference type="GO" id="GO:0019878">
    <property type="term" value="P:lysine biosynthetic process via aminoadipic acid"/>
    <property type="evidence" value="ECO:0007669"/>
    <property type="project" value="UniProtKB-UniRule"/>
</dbReference>
<dbReference type="CDD" id="cd04251">
    <property type="entry name" value="AAK_NAGK-UC"/>
    <property type="match status" value="1"/>
</dbReference>
<dbReference type="Gene3D" id="3.40.1160.10">
    <property type="entry name" value="Acetylglutamate kinase-like"/>
    <property type="match status" value="1"/>
</dbReference>
<dbReference type="HAMAP" id="MF_02082">
    <property type="entry name" value="LysZ"/>
    <property type="match status" value="1"/>
</dbReference>
<dbReference type="InterPro" id="IPR036393">
    <property type="entry name" value="AceGlu_kinase-like_sf"/>
</dbReference>
<dbReference type="InterPro" id="IPR004662">
    <property type="entry name" value="AcgluKinase_fam"/>
</dbReference>
<dbReference type="InterPro" id="IPR001048">
    <property type="entry name" value="Asp/Glu/Uridylate_kinase"/>
</dbReference>
<dbReference type="InterPro" id="IPR037529">
    <property type="entry name" value="LysZ"/>
</dbReference>
<dbReference type="NCBIfam" id="TIGR00761">
    <property type="entry name" value="argB"/>
    <property type="match status" value="1"/>
</dbReference>
<dbReference type="NCBIfam" id="NF010662">
    <property type="entry name" value="PRK14058.1-4"/>
    <property type="match status" value="1"/>
</dbReference>
<dbReference type="PANTHER" id="PTHR23342">
    <property type="entry name" value="N-ACETYLGLUTAMATE SYNTHASE"/>
    <property type="match status" value="1"/>
</dbReference>
<dbReference type="PANTHER" id="PTHR23342:SF0">
    <property type="entry name" value="N-ACETYLGLUTAMATE SYNTHASE, MITOCHONDRIAL"/>
    <property type="match status" value="1"/>
</dbReference>
<dbReference type="Pfam" id="PF00696">
    <property type="entry name" value="AA_kinase"/>
    <property type="match status" value="1"/>
</dbReference>
<dbReference type="PIRSF" id="PIRSF000728">
    <property type="entry name" value="NAGK"/>
    <property type="match status" value="1"/>
</dbReference>
<dbReference type="SUPFAM" id="SSF53633">
    <property type="entry name" value="Carbamate kinase-like"/>
    <property type="match status" value="1"/>
</dbReference>
<organism>
    <name type="scientific">Saccharolobus islandicus (strain M.16.4 / Kamchatka #3)</name>
    <name type="common">Sulfolobus islandicus</name>
    <dbReference type="NCBI Taxonomy" id="426118"/>
    <lineage>
        <taxon>Archaea</taxon>
        <taxon>Thermoproteota</taxon>
        <taxon>Thermoprotei</taxon>
        <taxon>Sulfolobales</taxon>
        <taxon>Sulfolobaceae</taxon>
        <taxon>Saccharolobus</taxon>
    </lineage>
</organism>
<sequence length="264" mass="28434">MIVVKIGGRVVKNSLDKVILDIANINDKVILVHGGGDIVTDYTKRLGIEPVFVTSPEGIRSRYTTKEELEVYIMAMSLINKTITSKLCSLGKNAIGITGVDGGLLLAERKKRIIVIDERGKKRIIEGGYTGKVKEVRSEVINHLMKLFDIIVVSPLALDVEESTPLNIDGDQAAFAISKAVKVNVLVILSDVEGVLVEGKVVDRLTPEEAKELSKKIGPGMNRKLLMAAESVENGVNKVIIGSGVKDRPVSSALELNGTVIVNG</sequence>
<proteinExistence type="inferred from homology"/>
<accession>C4KJ29</accession>
<name>LYSZ_SACI6</name>
<protein>
    <recommendedName>
        <fullName evidence="1">[LysW]-aminoadipate/[LysW]-glutamate kinase</fullName>
        <ecNumber evidence="1">2.7.2.17</ecNumber>
        <ecNumber evidence="1">2.7.2.19</ecNumber>
    </recommendedName>
</protein>
<feature type="chain" id="PRO_1000202569" description="[LysW]-aminoadipate/[LysW]-glutamate kinase">
    <location>
        <begin position="1"/>
        <end position="264"/>
    </location>
</feature>
<feature type="binding site" evidence="1">
    <location>
        <begin position="35"/>
        <end position="36"/>
    </location>
    <ligand>
        <name>substrate</name>
    </ligand>
</feature>
<feature type="binding site" evidence="1">
    <location>
        <position position="62"/>
    </location>
    <ligand>
        <name>substrate</name>
    </ligand>
</feature>
<feature type="binding site" evidence="1">
    <location>
        <position position="167"/>
    </location>
    <ligand>
        <name>substrate</name>
    </ligand>
</feature>
<feature type="site" description="Transition state stabilizer" evidence="1">
    <location>
        <position position="5"/>
    </location>
</feature>
<feature type="site" description="Transition state stabilizer" evidence="1">
    <location>
        <position position="224"/>
    </location>
</feature>